<evidence type="ECO:0000255" key="1">
    <source>
        <dbReference type="HAMAP-Rule" id="MF_01347"/>
    </source>
</evidence>
<protein>
    <recommendedName>
        <fullName evidence="1">ATP synthase subunit beta</fullName>
        <ecNumber evidence="1">7.1.2.2</ecNumber>
    </recommendedName>
    <alternativeName>
        <fullName evidence="1">ATP synthase F1 sector subunit beta</fullName>
    </alternativeName>
    <alternativeName>
        <fullName evidence="1">F-ATPase subunit beta</fullName>
    </alternativeName>
</protein>
<name>ATPB_METPP</name>
<proteinExistence type="inferred from homology"/>
<comment type="function">
    <text evidence="1">Produces ATP from ADP in the presence of a proton gradient across the membrane. The catalytic sites are hosted primarily by the beta subunits.</text>
</comment>
<comment type="catalytic activity">
    <reaction evidence="1">
        <text>ATP + H2O + 4 H(+)(in) = ADP + phosphate + 5 H(+)(out)</text>
        <dbReference type="Rhea" id="RHEA:57720"/>
        <dbReference type="ChEBI" id="CHEBI:15377"/>
        <dbReference type="ChEBI" id="CHEBI:15378"/>
        <dbReference type="ChEBI" id="CHEBI:30616"/>
        <dbReference type="ChEBI" id="CHEBI:43474"/>
        <dbReference type="ChEBI" id="CHEBI:456216"/>
        <dbReference type="EC" id="7.1.2.2"/>
    </reaction>
</comment>
<comment type="subunit">
    <text evidence="1">F-type ATPases have 2 components, CF(1) - the catalytic core - and CF(0) - the membrane proton channel. CF(1) has five subunits: alpha(3), beta(3), gamma(1), delta(1), epsilon(1). CF(0) has four main subunits: a(1), b(1), b'(1) and c(9-12).</text>
</comment>
<comment type="subcellular location">
    <subcellularLocation>
        <location evidence="1">Cell inner membrane</location>
        <topology evidence="1">Peripheral membrane protein</topology>
    </subcellularLocation>
</comment>
<comment type="similarity">
    <text evidence="1">Belongs to the ATPase alpha/beta chains family.</text>
</comment>
<keyword id="KW-0066">ATP synthesis</keyword>
<keyword id="KW-0067">ATP-binding</keyword>
<keyword id="KW-0997">Cell inner membrane</keyword>
<keyword id="KW-1003">Cell membrane</keyword>
<keyword id="KW-0139">CF(1)</keyword>
<keyword id="KW-0375">Hydrogen ion transport</keyword>
<keyword id="KW-0406">Ion transport</keyword>
<keyword id="KW-0472">Membrane</keyword>
<keyword id="KW-0547">Nucleotide-binding</keyword>
<keyword id="KW-1185">Reference proteome</keyword>
<keyword id="KW-1278">Translocase</keyword>
<keyword id="KW-0813">Transport</keyword>
<dbReference type="EC" id="7.1.2.2" evidence="1"/>
<dbReference type="EMBL" id="CP000555">
    <property type="protein sequence ID" value="ABM93159.1"/>
    <property type="molecule type" value="Genomic_DNA"/>
</dbReference>
<dbReference type="RefSeq" id="WP_011827798.1">
    <property type="nucleotide sequence ID" value="NC_008825.1"/>
</dbReference>
<dbReference type="SMR" id="A2SC70"/>
<dbReference type="STRING" id="420662.Mpe_A0197"/>
<dbReference type="KEGG" id="mpt:Mpe_A0197"/>
<dbReference type="eggNOG" id="COG0055">
    <property type="taxonomic scope" value="Bacteria"/>
</dbReference>
<dbReference type="HOGENOM" id="CLU_022398_0_2_4"/>
<dbReference type="Proteomes" id="UP000000366">
    <property type="component" value="Chromosome"/>
</dbReference>
<dbReference type="GO" id="GO:0005886">
    <property type="term" value="C:plasma membrane"/>
    <property type="evidence" value="ECO:0007669"/>
    <property type="project" value="UniProtKB-SubCell"/>
</dbReference>
<dbReference type="GO" id="GO:0045259">
    <property type="term" value="C:proton-transporting ATP synthase complex"/>
    <property type="evidence" value="ECO:0007669"/>
    <property type="project" value="UniProtKB-KW"/>
</dbReference>
<dbReference type="GO" id="GO:0005524">
    <property type="term" value="F:ATP binding"/>
    <property type="evidence" value="ECO:0007669"/>
    <property type="project" value="UniProtKB-UniRule"/>
</dbReference>
<dbReference type="GO" id="GO:0016887">
    <property type="term" value="F:ATP hydrolysis activity"/>
    <property type="evidence" value="ECO:0007669"/>
    <property type="project" value="InterPro"/>
</dbReference>
<dbReference type="GO" id="GO:0046933">
    <property type="term" value="F:proton-transporting ATP synthase activity, rotational mechanism"/>
    <property type="evidence" value="ECO:0007669"/>
    <property type="project" value="UniProtKB-UniRule"/>
</dbReference>
<dbReference type="CDD" id="cd18110">
    <property type="entry name" value="ATP-synt_F1_beta_C"/>
    <property type="match status" value="1"/>
</dbReference>
<dbReference type="CDD" id="cd18115">
    <property type="entry name" value="ATP-synt_F1_beta_N"/>
    <property type="match status" value="1"/>
</dbReference>
<dbReference type="CDD" id="cd01133">
    <property type="entry name" value="F1-ATPase_beta_CD"/>
    <property type="match status" value="1"/>
</dbReference>
<dbReference type="FunFam" id="1.10.1140.10:FF:000001">
    <property type="entry name" value="ATP synthase subunit beta"/>
    <property type="match status" value="1"/>
</dbReference>
<dbReference type="FunFam" id="3.40.50.300:FF:000004">
    <property type="entry name" value="ATP synthase subunit beta"/>
    <property type="match status" value="1"/>
</dbReference>
<dbReference type="Gene3D" id="2.40.10.170">
    <property type="match status" value="1"/>
</dbReference>
<dbReference type="Gene3D" id="1.10.1140.10">
    <property type="entry name" value="Bovine Mitochondrial F1-atpase, Atp Synthase Beta Chain, Chain D, domain 3"/>
    <property type="match status" value="1"/>
</dbReference>
<dbReference type="Gene3D" id="3.40.50.300">
    <property type="entry name" value="P-loop containing nucleotide triphosphate hydrolases"/>
    <property type="match status" value="1"/>
</dbReference>
<dbReference type="HAMAP" id="MF_01347">
    <property type="entry name" value="ATP_synth_beta_bact"/>
    <property type="match status" value="1"/>
</dbReference>
<dbReference type="InterPro" id="IPR003593">
    <property type="entry name" value="AAA+_ATPase"/>
</dbReference>
<dbReference type="InterPro" id="IPR055190">
    <property type="entry name" value="ATP-synt_VA_C"/>
</dbReference>
<dbReference type="InterPro" id="IPR005722">
    <property type="entry name" value="ATP_synth_F1_bsu"/>
</dbReference>
<dbReference type="InterPro" id="IPR020003">
    <property type="entry name" value="ATPase_a/bsu_AS"/>
</dbReference>
<dbReference type="InterPro" id="IPR050053">
    <property type="entry name" value="ATPase_alpha/beta_chains"/>
</dbReference>
<dbReference type="InterPro" id="IPR004100">
    <property type="entry name" value="ATPase_F1/V1/A1_a/bsu_N"/>
</dbReference>
<dbReference type="InterPro" id="IPR036121">
    <property type="entry name" value="ATPase_F1/V1/A1_a/bsu_N_sf"/>
</dbReference>
<dbReference type="InterPro" id="IPR000194">
    <property type="entry name" value="ATPase_F1/V1/A1_a/bsu_nucl-bd"/>
</dbReference>
<dbReference type="InterPro" id="IPR024034">
    <property type="entry name" value="ATPase_F1/V1_b/a_C"/>
</dbReference>
<dbReference type="InterPro" id="IPR027417">
    <property type="entry name" value="P-loop_NTPase"/>
</dbReference>
<dbReference type="NCBIfam" id="TIGR01039">
    <property type="entry name" value="atpD"/>
    <property type="match status" value="1"/>
</dbReference>
<dbReference type="PANTHER" id="PTHR15184">
    <property type="entry name" value="ATP SYNTHASE"/>
    <property type="match status" value="1"/>
</dbReference>
<dbReference type="PANTHER" id="PTHR15184:SF71">
    <property type="entry name" value="ATP SYNTHASE SUBUNIT BETA, MITOCHONDRIAL"/>
    <property type="match status" value="1"/>
</dbReference>
<dbReference type="Pfam" id="PF00006">
    <property type="entry name" value="ATP-synt_ab"/>
    <property type="match status" value="1"/>
</dbReference>
<dbReference type="Pfam" id="PF02874">
    <property type="entry name" value="ATP-synt_ab_N"/>
    <property type="match status" value="1"/>
</dbReference>
<dbReference type="Pfam" id="PF22919">
    <property type="entry name" value="ATP-synt_VA_C"/>
    <property type="match status" value="1"/>
</dbReference>
<dbReference type="SMART" id="SM00382">
    <property type="entry name" value="AAA"/>
    <property type="match status" value="1"/>
</dbReference>
<dbReference type="SUPFAM" id="SSF47917">
    <property type="entry name" value="C-terminal domain of alpha and beta subunits of F1 ATP synthase"/>
    <property type="match status" value="1"/>
</dbReference>
<dbReference type="SUPFAM" id="SSF50615">
    <property type="entry name" value="N-terminal domain of alpha and beta subunits of F1 ATP synthase"/>
    <property type="match status" value="1"/>
</dbReference>
<dbReference type="SUPFAM" id="SSF52540">
    <property type="entry name" value="P-loop containing nucleoside triphosphate hydrolases"/>
    <property type="match status" value="1"/>
</dbReference>
<dbReference type="PROSITE" id="PS00152">
    <property type="entry name" value="ATPASE_ALPHA_BETA"/>
    <property type="match status" value="1"/>
</dbReference>
<gene>
    <name evidence="1" type="primary">atpD</name>
    <name type="ordered locus">Mpe_A0197</name>
</gene>
<reference key="1">
    <citation type="journal article" date="2007" name="J. Bacteriol.">
        <title>Whole-genome analysis of the methyl tert-butyl ether-degrading beta-proteobacterium Methylibium petroleiphilum PM1.</title>
        <authorList>
            <person name="Kane S.R."/>
            <person name="Chakicherla A.Y."/>
            <person name="Chain P.S.G."/>
            <person name="Schmidt R."/>
            <person name="Shin M.W."/>
            <person name="Legler T.C."/>
            <person name="Scow K.M."/>
            <person name="Larimer F.W."/>
            <person name="Lucas S.M."/>
            <person name="Richardson P.M."/>
            <person name="Hristova K.R."/>
        </authorList>
    </citation>
    <scope>NUCLEOTIDE SEQUENCE [LARGE SCALE GENOMIC DNA]</scope>
    <source>
        <strain>ATCC BAA-1232 / LMG 22953 / PM1</strain>
    </source>
</reference>
<organism>
    <name type="scientific">Methylibium petroleiphilum (strain ATCC BAA-1232 / LMG 22953 / PM1)</name>
    <dbReference type="NCBI Taxonomy" id="420662"/>
    <lineage>
        <taxon>Bacteria</taxon>
        <taxon>Pseudomonadati</taxon>
        <taxon>Pseudomonadota</taxon>
        <taxon>Betaproteobacteria</taxon>
        <taxon>Burkholderiales</taxon>
        <taxon>Sphaerotilaceae</taxon>
        <taxon>Methylibium</taxon>
    </lineage>
</organism>
<feature type="chain" id="PRO_0000339545" description="ATP synthase subunit beta">
    <location>
        <begin position="1"/>
        <end position="471"/>
    </location>
</feature>
<feature type="binding site" evidence="1">
    <location>
        <begin position="153"/>
        <end position="160"/>
    </location>
    <ligand>
        <name>ATP</name>
        <dbReference type="ChEBI" id="CHEBI:30616"/>
    </ligand>
</feature>
<sequence>MANTQAAVGKIVQCIGAVVDVEFPRDQMPRVYDALKMEGSALTLEVQQQLGDGVVRTIALGSSDGLRRGLMVSNTGAAITVPVGKATLGRIMDVLGSPIDERGPVSAELSMPIHRKAPAYDELSPSQELLETGIKVIDLICPFAKGGKVGLFGGAGVGKTVNMMELINNIAKAHSGLSVFAGVGERTREGNDFYHEMSDSKVVVQEDLTQSKVAMVYGQMNEPPGNRLRVALTGLTIAESFRDEGRDVLFFVDNIYRYTLAGTEVSALLGRMPSAVGYQPTLAEEMGRLQERITSTKVGSITSIQAVYVPADDLTDPSPATTFAHLDATVVLSRDIASLGIYPAVDPLDSTSRQIDPNVVGEEHYNTTRAVQQVLQRYKELRDIIAILGMDELAPEDKLAVARARKIQRFLSQPFHVAEVFTGSPGKYVPLKETIRGFKMIVAGECDSLPEQAFYMVGTIDEAFEKAKKIQ</sequence>
<accession>A2SC70</accession>